<comment type="function">
    <text evidence="1">Sialate:O-sulfotransferase which catalyzes 8-O-sulfation at the Sia-glycan level using 3'-phosphoadenosine 5'-phosphosulfate (PAPS) as a donor, forming 8-O-sulfated Sia (Sia8S)-glycans. Displays selectivity toward glycolipids such as GM1 gangliosides.</text>
</comment>
<comment type="catalytic activity">
    <reaction evidence="1">
        <text>a ganglioside GM1b + 3'-phosphoadenylyl sulfate = an 8-O-sulfo-ganglioside GM1b + adenosine 3',5'-bisphosphate + H(+)</text>
        <dbReference type="Rhea" id="RHEA:74843"/>
        <dbReference type="ChEBI" id="CHEBI:15378"/>
        <dbReference type="ChEBI" id="CHEBI:58339"/>
        <dbReference type="ChEBI" id="CHEBI:58343"/>
        <dbReference type="ChEBI" id="CHEBI:90151"/>
        <dbReference type="ChEBI" id="CHEBI:194084"/>
    </reaction>
    <physiologicalReaction direction="left-to-right" evidence="1">
        <dbReference type="Rhea" id="RHEA:74844"/>
    </physiologicalReaction>
</comment>
<comment type="subcellular location">
    <subcellularLocation>
        <location evidence="1">Golgi apparatus membrane</location>
        <topology evidence="1">Single-pass type II membrane protein</topology>
    </subcellularLocation>
</comment>
<comment type="similarity">
    <text evidence="5">Belongs to the WSCD family.</text>
</comment>
<organism>
    <name type="scientific">Homo sapiens</name>
    <name type="common">Human</name>
    <dbReference type="NCBI Taxonomy" id="9606"/>
    <lineage>
        <taxon>Eukaryota</taxon>
        <taxon>Metazoa</taxon>
        <taxon>Chordata</taxon>
        <taxon>Craniata</taxon>
        <taxon>Vertebrata</taxon>
        <taxon>Euteleostomi</taxon>
        <taxon>Mammalia</taxon>
        <taxon>Eutheria</taxon>
        <taxon>Euarchontoglires</taxon>
        <taxon>Primates</taxon>
        <taxon>Haplorrhini</taxon>
        <taxon>Catarrhini</taxon>
        <taxon>Hominidae</taxon>
        <taxon>Homo</taxon>
    </lineage>
</organism>
<evidence type="ECO:0000250" key="1">
    <source>
        <dbReference type="UniProtKB" id="Q80XH4"/>
    </source>
</evidence>
<evidence type="ECO:0000255" key="2"/>
<evidence type="ECO:0000255" key="3">
    <source>
        <dbReference type="PROSITE-ProRule" id="PRU00558"/>
    </source>
</evidence>
<evidence type="ECO:0000269" key="4">
    <source>
    </source>
</evidence>
<evidence type="ECO:0000305" key="5"/>
<dbReference type="EMBL" id="AK289603">
    <property type="protein sequence ID" value="BAF82292.1"/>
    <property type="molecule type" value="mRNA"/>
</dbReference>
<dbReference type="EMBL" id="AL833730">
    <property type="protein sequence ID" value="CAH56249.1"/>
    <property type="molecule type" value="mRNA"/>
</dbReference>
<dbReference type="EMBL" id="CH471108">
    <property type="protein sequence ID" value="EAW90316.1"/>
    <property type="molecule type" value="Genomic_DNA"/>
</dbReference>
<dbReference type="EMBL" id="CH471108">
    <property type="protein sequence ID" value="EAW90317.1"/>
    <property type="molecule type" value="Genomic_DNA"/>
</dbReference>
<dbReference type="EMBL" id="BC009975">
    <property type="protein sequence ID" value="AAH09975.1"/>
    <property type="molecule type" value="mRNA"/>
</dbReference>
<dbReference type="EMBL" id="AB011095">
    <property type="protein sequence ID" value="BAA25449.1"/>
    <property type="molecule type" value="mRNA"/>
</dbReference>
<dbReference type="CCDS" id="CCDS32538.1"/>
<dbReference type="RefSeq" id="NP_001375334.1">
    <property type="nucleotide sequence ID" value="NM_001388405.1"/>
</dbReference>
<dbReference type="RefSeq" id="NP_001375335.1">
    <property type="nucleotide sequence ID" value="NM_001388406.1"/>
</dbReference>
<dbReference type="RefSeq" id="NP_001375336.1">
    <property type="nucleotide sequence ID" value="NM_001388407.1"/>
</dbReference>
<dbReference type="RefSeq" id="NP_056068.1">
    <property type="nucleotide sequence ID" value="NM_015253.2"/>
</dbReference>
<dbReference type="RefSeq" id="XP_005256629.1">
    <property type="nucleotide sequence ID" value="XM_005256572.2"/>
</dbReference>
<dbReference type="RefSeq" id="XP_005256630.1">
    <property type="nucleotide sequence ID" value="XM_005256573.1"/>
</dbReference>
<dbReference type="RefSeq" id="XP_047291657.1">
    <property type="nucleotide sequence ID" value="XM_047435701.1"/>
</dbReference>
<dbReference type="RefSeq" id="XP_047291658.1">
    <property type="nucleotide sequence ID" value="XM_047435702.1"/>
</dbReference>
<dbReference type="RefSeq" id="XP_054171595.1">
    <property type="nucleotide sequence ID" value="XM_054315620.1"/>
</dbReference>
<dbReference type="RefSeq" id="XP_054171596.1">
    <property type="nucleotide sequence ID" value="XM_054315621.1"/>
</dbReference>
<dbReference type="RefSeq" id="XP_054171597.1">
    <property type="nucleotide sequence ID" value="XM_054315622.1"/>
</dbReference>
<dbReference type="SMR" id="Q658N2"/>
<dbReference type="FunCoup" id="Q658N2">
    <property type="interactions" value="211"/>
</dbReference>
<dbReference type="STRING" id="9606.ENSP00000460825"/>
<dbReference type="GlyCosmos" id="Q658N2">
    <property type="glycosylation" value="2 sites, No reported glycans"/>
</dbReference>
<dbReference type="GlyGen" id="Q658N2">
    <property type="glycosylation" value="6 sites, 2 N-linked glycans (2 sites), 1 O-linked glycan (1 site)"/>
</dbReference>
<dbReference type="iPTMnet" id="Q658N2"/>
<dbReference type="PhosphoSitePlus" id="Q658N2"/>
<dbReference type="BioMuta" id="WSCD1"/>
<dbReference type="DMDM" id="74724420"/>
<dbReference type="MassIVE" id="Q658N2"/>
<dbReference type="PaxDb" id="9606-ENSP00000460825"/>
<dbReference type="PeptideAtlas" id="Q658N2"/>
<dbReference type="ProteomicsDB" id="65923"/>
<dbReference type="Antibodypedia" id="2667">
    <property type="antibodies" value="12 antibodies from 9 providers"/>
</dbReference>
<dbReference type="DNASU" id="23302"/>
<dbReference type="Ensembl" id="ENST00000317744.10">
    <property type="protein sequence ID" value="ENSP00000323087.5"/>
    <property type="gene ID" value="ENSG00000179314.17"/>
</dbReference>
<dbReference type="Ensembl" id="ENST00000571973.2">
    <property type="protein sequence ID" value="ENSP00000458527.2"/>
    <property type="gene ID" value="ENSG00000179314.17"/>
</dbReference>
<dbReference type="Ensembl" id="ENST00000574232.5">
    <property type="protein sequence ID" value="ENSP00000458374.1"/>
    <property type="gene ID" value="ENSG00000179314.17"/>
</dbReference>
<dbReference type="Ensembl" id="ENST00000574946.5">
    <property type="protein sequence ID" value="ENSP00000460825.1"/>
    <property type="gene ID" value="ENSG00000179314.17"/>
</dbReference>
<dbReference type="Ensembl" id="ENST00000576233.2">
    <property type="protein sequence ID" value="ENSP00000461642.2"/>
    <property type="gene ID" value="ENSG00000179314.17"/>
</dbReference>
<dbReference type="Ensembl" id="ENST00000714060.1">
    <property type="protein sequence ID" value="ENSP00000519350.1"/>
    <property type="gene ID" value="ENSG00000179314.17"/>
</dbReference>
<dbReference type="GeneID" id="23302"/>
<dbReference type="KEGG" id="hsa:23302"/>
<dbReference type="MANE-Select" id="ENST00000317744.10">
    <property type="protein sequence ID" value="ENSP00000323087.5"/>
    <property type="RefSeq nucleotide sequence ID" value="NM_015253.2"/>
    <property type="RefSeq protein sequence ID" value="NP_056068.1"/>
</dbReference>
<dbReference type="UCSC" id="uc002gcn.4">
    <property type="organism name" value="human"/>
</dbReference>
<dbReference type="AGR" id="HGNC:29060"/>
<dbReference type="CTD" id="23302"/>
<dbReference type="GeneCards" id="WSCD1"/>
<dbReference type="HGNC" id="HGNC:29060">
    <property type="gene designation" value="WSCD1"/>
</dbReference>
<dbReference type="HPA" id="ENSG00000179314">
    <property type="expression patterns" value="Tissue enhanced (brain, lymphoid tissue)"/>
</dbReference>
<dbReference type="MIM" id="619584">
    <property type="type" value="gene"/>
</dbReference>
<dbReference type="neXtProt" id="NX_Q658N2"/>
<dbReference type="OpenTargets" id="ENSG00000179314"/>
<dbReference type="PharmGKB" id="PA162409253"/>
<dbReference type="VEuPathDB" id="HostDB:ENSG00000179314"/>
<dbReference type="eggNOG" id="KOG4157">
    <property type="taxonomic scope" value="Eukaryota"/>
</dbReference>
<dbReference type="GeneTree" id="ENSGT00940000158096"/>
<dbReference type="InParanoid" id="Q658N2"/>
<dbReference type="OMA" id="KYAGHLG"/>
<dbReference type="OrthoDB" id="5985073at2759"/>
<dbReference type="PAN-GO" id="Q658N2">
    <property type="GO annotations" value="0 GO annotations based on evolutionary models"/>
</dbReference>
<dbReference type="PhylomeDB" id="Q658N2"/>
<dbReference type="TreeFam" id="TF324060"/>
<dbReference type="PathwayCommons" id="Q658N2"/>
<dbReference type="BioGRID-ORCS" id="23302">
    <property type="hits" value="10 hits in 1143 CRISPR screens"/>
</dbReference>
<dbReference type="ChiTaRS" id="WSCD1">
    <property type="organism name" value="human"/>
</dbReference>
<dbReference type="GenomeRNAi" id="23302"/>
<dbReference type="Pharos" id="Q658N2">
    <property type="development level" value="Tdark"/>
</dbReference>
<dbReference type="PRO" id="PR:Q658N2"/>
<dbReference type="Proteomes" id="UP000005640">
    <property type="component" value="Chromosome 17"/>
</dbReference>
<dbReference type="RNAct" id="Q658N2">
    <property type="molecule type" value="protein"/>
</dbReference>
<dbReference type="Bgee" id="ENSG00000179314">
    <property type="expression patterns" value="Expressed in ventricular zone and 149 other cell types or tissues"/>
</dbReference>
<dbReference type="ExpressionAtlas" id="Q658N2">
    <property type="expression patterns" value="baseline and differential"/>
</dbReference>
<dbReference type="GO" id="GO:0000139">
    <property type="term" value="C:Golgi membrane"/>
    <property type="evidence" value="ECO:0000250"/>
    <property type="project" value="UniProtKB"/>
</dbReference>
<dbReference type="GO" id="GO:0008146">
    <property type="term" value="F:sulfotransferase activity"/>
    <property type="evidence" value="ECO:0000250"/>
    <property type="project" value="UniProtKB"/>
</dbReference>
<dbReference type="Gene3D" id="3.40.50.300">
    <property type="entry name" value="P-loop containing nucleotide triphosphate hydrolases"/>
    <property type="match status" value="1"/>
</dbReference>
<dbReference type="InterPro" id="IPR027417">
    <property type="entry name" value="P-loop_NTPase"/>
</dbReference>
<dbReference type="InterPro" id="IPR051589">
    <property type="entry name" value="Sialate-O-sulfotransferase"/>
</dbReference>
<dbReference type="InterPro" id="IPR000863">
    <property type="entry name" value="Sulfotransferase_dom"/>
</dbReference>
<dbReference type="InterPro" id="IPR002889">
    <property type="entry name" value="WSC_carb-bd"/>
</dbReference>
<dbReference type="PANTHER" id="PTHR45964:SF8">
    <property type="entry name" value="SIALATE:O-SULFOTRANSFERASE 1"/>
    <property type="match status" value="1"/>
</dbReference>
<dbReference type="PANTHER" id="PTHR45964">
    <property type="entry name" value="WSCD FAMILY MEMBER CG9164"/>
    <property type="match status" value="1"/>
</dbReference>
<dbReference type="Pfam" id="PF00685">
    <property type="entry name" value="Sulfotransfer_1"/>
    <property type="match status" value="1"/>
</dbReference>
<dbReference type="Pfam" id="PF01822">
    <property type="entry name" value="WSC"/>
    <property type="match status" value="2"/>
</dbReference>
<dbReference type="SMART" id="SM00321">
    <property type="entry name" value="WSC"/>
    <property type="match status" value="2"/>
</dbReference>
<dbReference type="SUPFAM" id="SSF52540">
    <property type="entry name" value="P-loop containing nucleoside triphosphate hydrolases"/>
    <property type="match status" value="1"/>
</dbReference>
<dbReference type="PROSITE" id="PS51212">
    <property type="entry name" value="WSC"/>
    <property type="match status" value="2"/>
</dbReference>
<feature type="chain" id="PRO_0000305061" description="Sialate:O-sulfotransferase 1">
    <location>
        <begin position="1"/>
        <end position="575"/>
    </location>
</feature>
<feature type="topological domain" description="Cytoplasmic" evidence="1">
    <location>
        <begin position="1"/>
        <end position="14"/>
    </location>
</feature>
<feature type="transmembrane region" description="Helical; Signal-anchor for type II membrane protein" evidence="2">
    <location>
        <begin position="15"/>
        <end position="35"/>
    </location>
</feature>
<feature type="topological domain" description="Extracellular" evidence="1">
    <location>
        <begin position="36"/>
        <end position="575"/>
    </location>
</feature>
<feature type="domain" description="WSC 1" evidence="3">
    <location>
        <begin position="142"/>
        <end position="234"/>
    </location>
</feature>
<feature type="domain" description="WSC 2" evidence="3">
    <location>
        <begin position="245"/>
        <end position="340"/>
    </location>
</feature>
<feature type="glycosylation site" description="N-linked (GlcNAc...) asparagine" evidence="2">
    <location>
        <position position="257"/>
    </location>
</feature>
<feature type="glycosylation site" description="N-linked (GlcNAc...) asparagine" evidence="2">
    <location>
        <position position="348"/>
    </location>
</feature>
<feature type="sequence variant" id="VAR_035160" description="In dbSNP:rs17855415." evidence="4">
    <original>H</original>
    <variation>Y</variation>
    <location>
        <position position="212"/>
    </location>
</feature>
<keyword id="KW-0325">Glycoprotein</keyword>
<keyword id="KW-0333">Golgi apparatus</keyword>
<keyword id="KW-0472">Membrane</keyword>
<keyword id="KW-1267">Proteomics identification</keyword>
<keyword id="KW-1185">Reference proteome</keyword>
<keyword id="KW-0677">Repeat</keyword>
<keyword id="KW-0735">Signal-anchor</keyword>
<keyword id="KW-0812">Transmembrane</keyword>
<keyword id="KW-1133">Transmembrane helix</keyword>
<proteinExistence type="evidence at protein level"/>
<protein>
    <recommendedName>
        <fullName evidence="1">Sialate:O-sulfotransferase 1</fullName>
    </recommendedName>
    <alternativeName>
        <fullName>WSC domain-containing protein 1</fullName>
    </alternativeName>
</protein>
<gene>
    <name type="primary">WSCD1</name>
    <name type="synonym">KIAA0523</name>
</gene>
<reference key="1">
    <citation type="journal article" date="2004" name="Nat. Genet.">
        <title>Complete sequencing and characterization of 21,243 full-length human cDNAs.</title>
        <authorList>
            <person name="Ota T."/>
            <person name="Suzuki Y."/>
            <person name="Nishikawa T."/>
            <person name="Otsuki T."/>
            <person name="Sugiyama T."/>
            <person name="Irie R."/>
            <person name="Wakamatsu A."/>
            <person name="Hayashi K."/>
            <person name="Sato H."/>
            <person name="Nagai K."/>
            <person name="Kimura K."/>
            <person name="Makita H."/>
            <person name="Sekine M."/>
            <person name="Obayashi M."/>
            <person name="Nishi T."/>
            <person name="Shibahara T."/>
            <person name="Tanaka T."/>
            <person name="Ishii S."/>
            <person name="Yamamoto J."/>
            <person name="Saito K."/>
            <person name="Kawai Y."/>
            <person name="Isono Y."/>
            <person name="Nakamura Y."/>
            <person name="Nagahari K."/>
            <person name="Murakami K."/>
            <person name="Yasuda T."/>
            <person name="Iwayanagi T."/>
            <person name="Wagatsuma M."/>
            <person name="Shiratori A."/>
            <person name="Sudo H."/>
            <person name="Hosoiri T."/>
            <person name="Kaku Y."/>
            <person name="Kodaira H."/>
            <person name="Kondo H."/>
            <person name="Sugawara M."/>
            <person name="Takahashi M."/>
            <person name="Kanda K."/>
            <person name="Yokoi T."/>
            <person name="Furuya T."/>
            <person name="Kikkawa E."/>
            <person name="Omura Y."/>
            <person name="Abe K."/>
            <person name="Kamihara K."/>
            <person name="Katsuta N."/>
            <person name="Sato K."/>
            <person name="Tanikawa M."/>
            <person name="Yamazaki M."/>
            <person name="Ninomiya K."/>
            <person name="Ishibashi T."/>
            <person name="Yamashita H."/>
            <person name="Murakawa K."/>
            <person name="Fujimori K."/>
            <person name="Tanai H."/>
            <person name="Kimata M."/>
            <person name="Watanabe M."/>
            <person name="Hiraoka S."/>
            <person name="Chiba Y."/>
            <person name="Ishida S."/>
            <person name="Ono Y."/>
            <person name="Takiguchi S."/>
            <person name="Watanabe S."/>
            <person name="Yosida M."/>
            <person name="Hotuta T."/>
            <person name="Kusano J."/>
            <person name="Kanehori K."/>
            <person name="Takahashi-Fujii A."/>
            <person name="Hara H."/>
            <person name="Tanase T.-O."/>
            <person name="Nomura Y."/>
            <person name="Togiya S."/>
            <person name="Komai F."/>
            <person name="Hara R."/>
            <person name="Takeuchi K."/>
            <person name="Arita M."/>
            <person name="Imose N."/>
            <person name="Musashino K."/>
            <person name="Yuuki H."/>
            <person name="Oshima A."/>
            <person name="Sasaki N."/>
            <person name="Aotsuka S."/>
            <person name="Yoshikawa Y."/>
            <person name="Matsunawa H."/>
            <person name="Ichihara T."/>
            <person name="Shiohata N."/>
            <person name="Sano S."/>
            <person name="Moriya S."/>
            <person name="Momiyama H."/>
            <person name="Satoh N."/>
            <person name="Takami S."/>
            <person name="Terashima Y."/>
            <person name="Suzuki O."/>
            <person name="Nakagawa S."/>
            <person name="Senoh A."/>
            <person name="Mizoguchi H."/>
            <person name="Goto Y."/>
            <person name="Shimizu F."/>
            <person name="Wakebe H."/>
            <person name="Hishigaki H."/>
            <person name="Watanabe T."/>
            <person name="Sugiyama A."/>
            <person name="Takemoto M."/>
            <person name="Kawakami B."/>
            <person name="Yamazaki M."/>
            <person name="Watanabe K."/>
            <person name="Kumagai A."/>
            <person name="Itakura S."/>
            <person name="Fukuzumi Y."/>
            <person name="Fujimori Y."/>
            <person name="Komiyama M."/>
            <person name="Tashiro H."/>
            <person name="Tanigami A."/>
            <person name="Fujiwara T."/>
            <person name="Ono T."/>
            <person name="Yamada K."/>
            <person name="Fujii Y."/>
            <person name="Ozaki K."/>
            <person name="Hirao M."/>
            <person name="Ohmori Y."/>
            <person name="Kawabata A."/>
            <person name="Hikiji T."/>
            <person name="Kobatake N."/>
            <person name="Inagaki H."/>
            <person name="Ikema Y."/>
            <person name="Okamoto S."/>
            <person name="Okitani R."/>
            <person name="Kawakami T."/>
            <person name="Noguchi S."/>
            <person name="Itoh T."/>
            <person name="Shigeta K."/>
            <person name="Senba T."/>
            <person name="Matsumura K."/>
            <person name="Nakajima Y."/>
            <person name="Mizuno T."/>
            <person name="Morinaga M."/>
            <person name="Sasaki M."/>
            <person name="Togashi T."/>
            <person name="Oyama M."/>
            <person name="Hata H."/>
            <person name="Watanabe M."/>
            <person name="Komatsu T."/>
            <person name="Mizushima-Sugano J."/>
            <person name="Satoh T."/>
            <person name="Shirai Y."/>
            <person name="Takahashi Y."/>
            <person name="Nakagawa K."/>
            <person name="Okumura K."/>
            <person name="Nagase T."/>
            <person name="Nomura N."/>
            <person name="Kikuchi H."/>
            <person name="Masuho Y."/>
            <person name="Yamashita R."/>
            <person name="Nakai K."/>
            <person name="Yada T."/>
            <person name="Nakamura Y."/>
            <person name="Ohara O."/>
            <person name="Isogai T."/>
            <person name="Sugano S."/>
        </authorList>
    </citation>
    <scope>NUCLEOTIDE SEQUENCE [LARGE SCALE MRNA]</scope>
</reference>
<reference key="2">
    <citation type="journal article" date="2007" name="BMC Genomics">
        <title>The full-ORF clone resource of the German cDNA consortium.</title>
        <authorList>
            <person name="Bechtel S."/>
            <person name="Rosenfelder H."/>
            <person name="Duda A."/>
            <person name="Schmidt C.P."/>
            <person name="Ernst U."/>
            <person name="Wellenreuther R."/>
            <person name="Mehrle A."/>
            <person name="Schuster C."/>
            <person name="Bahr A."/>
            <person name="Bloecker H."/>
            <person name="Heubner D."/>
            <person name="Hoerlein A."/>
            <person name="Michel G."/>
            <person name="Wedler H."/>
            <person name="Koehrer K."/>
            <person name="Ottenwaelder B."/>
            <person name="Poustka A."/>
            <person name="Wiemann S."/>
            <person name="Schupp I."/>
        </authorList>
    </citation>
    <scope>NUCLEOTIDE SEQUENCE [LARGE SCALE MRNA]</scope>
    <source>
        <tissue>Stomach</tissue>
    </source>
</reference>
<reference key="3">
    <citation type="submission" date="2005-09" db="EMBL/GenBank/DDBJ databases">
        <authorList>
            <person name="Mural R.J."/>
            <person name="Istrail S."/>
            <person name="Sutton G.G."/>
            <person name="Florea L."/>
            <person name="Halpern A.L."/>
            <person name="Mobarry C.M."/>
            <person name="Lippert R."/>
            <person name="Walenz B."/>
            <person name="Shatkay H."/>
            <person name="Dew I."/>
            <person name="Miller J.R."/>
            <person name="Flanigan M.J."/>
            <person name="Edwards N.J."/>
            <person name="Bolanos R."/>
            <person name="Fasulo D."/>
            <person name="Halldorsson B.V."/>
            <person name="Hannenhalli S."/>
            <person name="Turner R."/>
            <person name="Yooseph S."/>
            <person name="Lu F."/>
            <person name="Nusskern D.R."/>
            <person name="Shue B.C."/>
            <person name="Zheng X.H."/>
            <person name="Zhong F."/>
            <person name="Delcher A.L."/>
            <person name="Huson D.H."/>
            <person name="Kravitz S.A."/>
            <person name="Mouchard L."/>
            <person name="Reinert K."/>
            <person name="Remington K.A."/>
            <person name="Clark A.G."/>
            <person name="Waterman M.S."/>
            <person name="Eichler E.E."/>
            <person name="Adams M.D."/>
            <person name="Hunkapiller M.W."/>
            <person name="Myers E.W."/>
            <person name="Venter J.C."/>
        </authorList>
    </citation>
    <scope>NUCLEOTIDE SEQUENCE [LARGE SCALE GENOMIC DNA]</scope>
</reference>
<reference key="4">
    <citation type="journal article" date="2004" name="Genome Res.">
        <title>The status, quality, and expansion of the NIH full-length cDNA project: the Mammalian Gene Collection (MGC).</title>
        <authorList>
            <consortium name="The MGC Project Team"/>
        </authorList>
    </citation>
    <scope>NUCLEOTIDE SEQUENCE [LARGE SCALE MRNA]</scope>
    <scope>VARIANT TYR-212</scope>
    <source>
        <tissue>Muscle</tissue>
    </source>
</reference>
<reference key="5">
    <citation type="journal article" date="1998" name="DNA Res.">
        <title>Prediction of the coding sequences of unidentified human genes. IX. The complete sequences of 100 new cDNA clones from brain which can code for large proteins in vitro.</title>
        <authorList>
            <person name="Nagase T."/>
            <person name="Ishikawa K."/>
            <person name="Miyajima N."/>
            <person name="Tanaka A."/>
            <person name="Kotani H."/>
            <person name="Nomura N."/>
            <person name="Ohara O."/>
        </authorList>
    </citation>
    <scope>NUCLEOTIDE SEQUENCE [LARGE SCALE MRNA] OF 108-575</scope>
    <source>
        <tissue>Brain</tissue>
    </source>
</reference>
<accession>Q658N2</accession>
<accession>A8K0N8</accession>
<accession>D3DTM3</accession>
<accession>O60276</accession>
<accession>Q96G45</accession>
<sequence length="575" mass="65694">MAKPFFRLQKFLRRTQFLLFFLTAAYLMTGSLLLLQRVRVALPQGPRAPGPLQTLPVAAVALGVGLLDSRALHDPRVSPELLLGVDMLQSPLTRPRPGPRWLRSRNSELRQLRRRWFHHFMSDSQGPPALGPEAARPAIHSRGTYIGCFSDDGHERTLKGAVFYDLRKMTVSHCQDACAERSYVYAGLEAGAECYCGNRLPAVSVGLEECNHECKGEKGSVCGAVDRLSVYRVDELQPGSRKRRTATYRGCFRLPENITHAFPSSLIQANVTVGTCSGFCSQKEFPLAILRGWECYCAYPTPRFNLRDAMDSSVCGQDPEAQRLAEYCEVYQTPVQDTRCTDRRFLPNKSKVFVALSSFPGAGNTWARHLIEHATGFYTGSYYFDGTLYNKGFKGEKDHWRSRRTICVKTHESGRREIEMFDSAILLIRNPYRSLVAEFNRKCAGHLGYAADRNWKSKEWPDFVNSYASWWSSHVLDWLKYGKRLLVVHYEELRRSLVPTLREMVAFLNVSVSEERLLCVENNKEGSFRRRGRRSHDPEPFTPEMKDLINGYIRTVDQALRDHNWTGLPREYVPR</sequence>
<name>WSCD1_HUMAN</name>